<dbReference type="EC" id="2.3.1.180" evidence="1"/>
<dbReference type="EMBL" id="CP000736">
    <property type="protein sequence ID" value="ABR51857.1"/>
    <property type="molecule type" value="Genomic_DNA"/>
</dbReference>
<dbReference type="SMR" id="A6U089"/>
<dbReference type="KEGG" id="sah:SaurJH1_1001"/>
<dbReference type="HOGENOM" id="CLU_039592_3_1_9"/>
<dbReference type="UniPathway" id="UPA00094"/>
<dbReference type="GO" id="GO:0005737">
    <property type="term" value="C:cytoplasm"/>
    <property type="evidence" value="ECO:0007669"/>
    <property type="project" value="UniProtKB-SubCell"/>
</dbReference>
<dbReference type="GO" id="GO:0004315">
    <property type="term" value="F:3-oxoacyl-[acyl-carrier-protein] synthase activity"/>
    <property type="evidence" value="ECO:0007669"/>
    <property type="project" value="InterPro"/>
</dbReference>
<dbReference type="GO" id="GO:0033818">
    <property type="term" value="F:beta-ketoacyl-acyl-carrier-protein synthase III activity"/>
    <property type="evidence" value="ECO:0007669"/>
    <property type="project" value="UniProtKB-UniRule"/>
</dbReference>
<dbReference type="GO" id="GO:0006633">
    <property type="term" value="P:fatty acid biosynthetic process"/>
    <property type="evidence" value="ECO:0007669"/>
    <property type="project" value="UniProtKB-UniRule"/>
</dbReference>
<dbReference type="CDD" id="cd00830">
    <property type="entry name" value="KAS_III"/>
    <property type="match status" value="1"/>
</dbReference>
<dbReference type="FunFam" id="3.40.47.10:FF:000004">
    <property type="entry name" value="3-oxoacyl-[acyl-carrier-protein] synthase 3"/>
    <property type="match status" value="1"/>
</dbReference>
<dbReference type="Gene3D" id="3.40.47.10">
    <property type="match status" value="2"/>
</dbReference>
<dbReference type="HAMAP" id="MF_01815">
    <property type="entry name" value="FabH"/>
    <property type="match status" value="1"/>
</dbReference>
<dbReference type="InterPro" id="IPR013747">
    <property type="entry name" value="ACP_syn_III_C"/>
</dbReference>
<dbReference type="InterPro" id="IPR013751">
    <property type="entry name" value="ACP_syn_III_N"/>
</dbReference>
<dbReference type="InterPro" id="IPR004655">
    <property type="entry name" value="FabH"/>
</dbReference>
<dbReference type="InterPro" id="IPR016039">
    <property type="entry name" value="Thiolase-like"/>
</dbReference>
<dbReference type="NCBIfam" id="TIGR00747">
    <property type="entry name" value="fabH"/>
    <property type="match status" value="1"/>
</dbReference>
<dbReference type="NCBIfam" id="NF006829">
    <property type="entry name" value="PRK09352.1"/>
    <property type="match status" value="1"/>
</dbReference>
<dbReference type="PANTHER" id="PTHR43091">
    <property type="entry name" value="3-OXOACYL-[ACYL-CARRIER-PROTEIN] SYNTHASE"/>
    <property type="match status" value="1"/>
</dbReference>
<dbReference type="PANTHER" id="PTHR43091:SF1">
    <property type="entry name" value="BETA-KETOACYL-[ACYL-CARRIER-PROTEIN] SYNTHASE III, CHLOROPLASTIC"/>
    <property type="match status" value="1"/>
</dbReference>
<dbReference type="Pfam" id="PF08545">
    <property type="entry name" value="ACP_syn_III"/>
    <property type="match status" value="1"/>
</dbReference>
<dbReference type="Pfam" id="PF08541">
    <property type="entry name" value="ACP_syn_III_C"/>
    <property type="match status" value="1"/>
</dbReference>
<dbReference type="SUPFAM" id="SSF53901">
    <property type="entry name" value="Thiolase-like"/>
    <property type="match status" value="1"/>
</dbReference>
<gene>
    <name evidence="1" type="primary">fabH</name>
    <name type="ordered locus">SaurJH1_1001</name>
</gene>
<name>FABH_STAA2</name>
<feature type="chain" id="PRO_1000088324" description="Beta-ketoacyl-[acyl-carrier-protein] synthase III">
    <location>
        <begin position="1"/>
        <end position="313"/>
    </location>
</feature>
<feature type="region of interest" description="ACP-binding" evidence="1">
    <location>
        <begin position="239"/>
        <end position="243"/>
    </location>
</feature>
<feature type="active site" evidence="1">
    <location>
        <position position="112"/>
    </location>
</feature>
<feature type="active site" evidence="1">
    <location>
        <position position="238"/>
    </location>
</feature>
<feature type="active site" evidence="1">
    <location>
        <position position="268"/>
    </location>
</feature>
<accession>A6U089</accession>
<organism>
    <name type="scientific">Staphylococcus aureus (strain JH1)</name>
    <dbReference type="NCBI Taxonomy" id="359787"/>
    <lineage>
        <taxon>Bacteria</taxon>
        <taxon>Bacillati</taxon>
        <taxon>Bacillota</taxon>
        <taxon>Bacilli</taxon>
        <taxon>Bacillales</taxon>
        <taxon>Staphylococcaceae</taxon>
        <taxon>Staphylococcus</taxon>
    </lineage>
</organism>
<reference key="1">
    <citation type="submission" date="2007-06" db="EMBL/GenBank/DDBJ databases">
        <title>Complete sequence of chromosome of Staphylococcus aureus subsp. aureus JH1.</title>
        <authorList>
            <consortium name="US DOE Joint Genome Institute"/>
            <person name="Copeland A."/>
            <person name="Lucas S."/>
            <person name="Lapidus A."/>
            <person name="Barry K."/>
            <person name="Detter J.C."/>
            <person name="Glavina del Rio T."/>
            <person name="Hammon N."/>
            <person name="Israni S."/>
            <person name="Dalin E."/>
            <person name="Tice H."/>
            <person name="Pitluck S."/>
            <person name="Chain P."/>
            <person name="Malfatti S."/>
            <person name="Shin M."/>
            <person name="Vergez L."/>
            <person name="Schmutz J."/>
            <person name="Larimer F."/>
            <person name="Land M."/>
            <person name="Hauser L."/>
            <person name="Kyrpides N."/>
            <person name="Ivanova N."/>
            <person name="Tomasz A."/>
            <person name="Richardson P."/>
        </authorList>
    </citation>
    <scope>NUCLEOTIDE SEQUENCE [LARGE SCALE GENOMIC DNA]</scope>
    <source>
        <strain>JH1</strain>
    </source>
</reference>
<sequence>MNVGIKGFGAYAPEKIIDNAYFEQFLDTSDEWISKMTGIKERHWADDDQDTSDLAYEASVKAIADAGIQPEDIDMIIVATATGDMPFPTVANMLQERLGTGKVASMDQLAACSGFMYSMITAKQYVQSGDYHNILVVGADKLSKITDLTDRSTAVLFGDGAGAVIIGEVSEGRGIISYEMGSDGTGGKHLYLDKDTGKLKMNGREVFKFAVRIMGDASTRVVEKANLTSDDIDLFIPHQANIRIMESARERLGISKDKMSVSVNKYGNTSAASIPLSIDQELKNGKLKDDDTIVLVGFGGGLTWGAMTIKWGK</sequence>
<protein>
    <recommendedName>
        <fullName evidence="1">Beta-ketoacyl-[acyl-carrier-protein] synthase III</fullName>
        <shortName evidence="1">Beta-ketoacyl-ACP synthase III</shortName>
        <shortName evidence="1">KAS III</shortName>
        <ecNumber evidence="1">2.3.1.180</ecNumber>
    </recommendedName>
    <alternativeName>
        <fullName evidence="1">3-oxoacyl-[acyl-carrier-protein] synthase 3</fullName>
    </alternativeName>
    <alternativeName>
        <fullName evidence="1">3-oxoacyl-[acyl-carrier-protein] synthase III</fullName>
    </alternativeName>
</protein>
<keyword id="KW-0012">Acyltransferase</keyword>
<keyword id="KW-0963">Cytoplasm</keyword>
<keyword id="KW-0275">Fatty acid biosynthesis</keyword>
<keyword id="KW-0276">Fatty acid metabolism</keyword>
<keyword id="KW-0444">Lipid biosynthesis</keyword>
<keyword id="KW-0443">Lipid metabolism</keyword>
<keyword id="KW-0511">Multifunctional enzyme</keyword>
<keyword id="KW-0808">Transferase</keyword>
<evidence type="ECO:0000255" key="1">
    <source>
        <dbReference type="HAMAP-Rule" id="MF_01815"/>
    </source>
</evidence>
<proteinExistence type="inferred from homology"/>
<comment type="function">
    <text evidence="1">Catalyzes the condensation reaction of fatty acid synthesis by the addition to an acyl acceptor of two carbons from malonyl-ACP. Catalyzes the first condensation reaction which initiates fatty acid synthesis and may therefore play a role in governing the total rate of fatty acid production. Possesses both acetoacetyl-ACP synthase and acetyl transacylase activities. Its substrate specificity determines the biosynthesis of branched-chain and/or straight-chain of fatty acids.</text>
</comment>
<comment type="catalytic activity">
    <reaction evidence="1">
        <text>malonyl-[ACP] + acetyl-CoA + H(+) = 3-oxobutanoyl-[ACP] + CO2 + CoA</text>
        <dbReference type="Rhea" id="RHEA:12080"/>
        <dbReference type="Rhea" id="RHEA-COMP:9623"/>
        <dbReference type="Rhea" id="RHEA-COMP:9625"/>
        <dbReference type="ChEBI" id="CHEBI:15378"/>
        <dbReference type="ChEBI" id="CHEBI:16526"/>
        <dbReference type="ChEBI" id="CHEBI:57287"/>
        <dbReference type="ChEBI" id="CHEBI:57288"/>
        <dbReference type="ChEBI" id="CHEBI:78449"/>
        <dbReference type="ChEBI" id="CHEBI:78450"/>
        <dbReference type="EC" id="2.3.1.180"/>
    </reaction>
</comment>
<comment type="pathway">
    <text evidence="1">Lipid metabolism; fatty acid biosynthesis.</text>
</comment>
<comment type="subunit">
    <text evidence="1">Homodimer.</text>
</comment>
<comment type="subcellular location">
    <subcellularLocation>
        <location evidence="1">Cytoplasm</location>
    </subcellularLocation>
</comment>
<comment type="domain">
    <text evidence="1">The last Arg residue of the ACP-binding site is essential for the weak association between ACP/AcpP and FabH.</text>
</comment>
<comment type="similarity">
    <text evidence="1">Belongs to the thiolase-like superfamily. FabH family.</text>
</comment>